<keyword id="KW-1185">Reference proteome</keyword>
<protein>
    <recommendedName>
        <fullName>Uncharacterized protein TP_0584</fullName>
    </recommendedName>
</protein>
<name>Y584_TREPA</name>
<accession>O83593</accession>
<proteinExistence type="predicted"/>
<sequence>MEERKNYMDRLAEALTRRKVQLDRDILPKALEQYRVQVTAVKAIRSNLLQKGFLHDDAYKYDSKMTEIELPETSPYGENEKPMVIGSRLSHYQTMLGFLDNYYRFDSEFLIPKRIAKLVALNGTFMWKDFTATTKDANTRGLFDIVQSFYGAADPISIGLVRDSLQYLVKAHEVISTALKSLSVFHRERYKLLIRQHALDGLDETTVDVNNPEVALDAMKKNFSENAKGHPFYSELATVVLREDFSANAEKLRAAILREFEESSAPKRCRGAMRNPHAVLLSGFRSLGATSSHFHTALEKIRFNEELVTQSEAAFFSKVVLAFLKAFNIQTRSKDVEIVVVDPATQIQKKECVNVELFQKELARCVKLYRGFVSPDTPIHEKLMALKDEQLFELLFKHVAEAHTLVKQLAGLDEYYKTVRSDVRAKIKGVKIEVTTITTSVTKANKCRAEYASQLEEQKHMKRLGVARA</sequence>
<reference key="1">
    <citation type="journal article" date="1998" name="Science">
        <title>Complete genome sequence of Treponema pallidum, the syphilis spirochete.</title>
        <authorList>
            <person name="Fraser C.M."/>
            <person name="Norris S.J."/>
            <person name="Weinstock G.M."/>
            <person name="White O."/>
            <person name="Sutton G.G."/>
            <person name="Dodson R.J."/>
            <person name="Gwinn M.L."/>
            <person name="Hickey E.K."/>
            <person name="Clayton R.A."/>
            <person name="Ketchum K.A."/>
            <person name="Sodergren E."/>
            <person name="Hardham J.M."/>
            <person name="McLeod M.P."/>
            <person name="Salzberg S.L."/>
            <person name="Peterson J.D."/>
            <person name="Khalak H.G."/>
            <person name="Richardson D.L."/>
            <person name="Howell J.K."/>
            <person name="Chidambaram M."/>
            <person name="Utterback T.R."/>
            <person name="McDonald L.A."/>
            <person name="Artiach P."/>
            <person name="Bowman C."/>
            <person name="Cotton M.D."/>
            <person name="Fujii C."/>
            <person name="Garland S.A."/>
            <person name="Hatch B."/>
            <person name="Horst K."/>
            <person name="Roberts K.M."/>
            <person name="Sandusky M."/>
            <person name="Weidman J.F."/>
            <person name="Smith H.O."/>
            <person name="Venter J.C."/>
        </authorList>
    </citation>
    <scope>NUCLEOTIDE SEQUENCE [LARGE SCALE GENOMIC DNA]</scope>
    <source>
        <strain>Nichols</strain>
    </source>
</reference>
<gene>
    <name type="ordered locus">TP_0584</name>
</gene>
<dbReference type="EMBL" id="AE000520">
    <property type="protein sequence ID" value="AAC65560.1"/>
    <property type="molecule type" value="Genomic_DNA"/>
</dbReference>
<dbReference type="PIR" id="F71307">
    <property type="entry name" value="F71307"/>
</dbReference>
<dbReference type="RefSeq" id="WP_010882030.1">
    <property type="nucleotide sequence ID" value="NC_021490.2"/>
</dbReference>
<dbReference type="SMR" id="O83593"/>
<dbReference type="STRING" id="243276.TP_0584"/>
<dbReference type="EnsemblBacteria" id="AAC65560">
    <property type="protein sequence ID" value="AAC65560"/>
    <property type="gene ID" value="TP_0584"/>
</dbReference>
<dbReference type="KEGG" id="tpa:TP_0584"/>
<dbReference type="KEGG" id="tpw:TPANIC_0584"/>
<dbReference type="eggNOG" id="ENOG5033PNA">
    <property type="taxonomic scope" value="Bacteria"/>
</dbReference>
<dbReference type="HOGENOM" id="CLU_585163_0_0_12"/>
<dbReference type="OrthoDB" id="354733at2"/>
<dbReference type="Proteomes" id="UP000000811">
    <property type="component" value="Chromosome"/>
</dbReference>
<organism>
    <name type="scientific">Treponema pallidum (strain Nichols)</name>
    <dbReference type="NCBI Taxonomy" id="243276"/>
    <lineage>
        <taxon>Bacteria</taxon>
        <taxon>Pseudomonadati</taxon>
        <taxon>Spirochaetota</taxon>
        <taxon>Spirochaetia</taxon>
        <taxon>Spirochaetales</taxon>
        <taxon>Treponemataceae</taxon>
        <taxon>Treponema</taxon>
    </lineage>
</organism>
<feature type="chain" id="PRO_0000202280" description="Uncharacterized protein TP_0584">
    <location>
        <begin position="1"/>
        <end position="469"/>
    </location>
</feature>